<feature type="chain" id="PRO_0000098893" description="Tryptophan synthase alpha chain">
    <location>
        <begin position="1"/>
        <end position="270"/>
    </location>
</feature>
<feature type="active site" description="Proton acceptor" evidence="1">
    <location>
        <position position="51"/>
    </location>
</feature>
<feature type="active site" description="Proton acceptor" evidence="1">
    <location>
        <position position="62"/>
    </location>
</feature>
<proteinExistence type="inferred from homology"/>
<organism>
    <name type="scientific">Methanothermobacter thermautotrophicus (strain ATCC 29096 / DSM 1053 / JCM 10044 / NBRC 100330 / Delta H)</name>
    <name type="common">Methanobacterium thermoautotrophicum</name>
    <dbReference type="NCBI Taxonomy" id="187420"/>
    <lineage>
        <taxon>Archaea</taxon>
        <taxon>Methanobacteriati</taxon>
        <taxon>Methanobacteriota</taxon>
        <taxon>Methanomada group</taxon>
        <taxon>Methanobacteria</taxon>
        <taxon>Methanobacteriales</taxon>
        <taxon>Methanobacteriaceae</taxon>
        <taxon>Methanothermobacter</taxon>
    </lineage>
</organism>
<gene>
    <name evidence="1" type="primary">trpA</name>
    <name type="ordered locus">MTH_1660</name>
</gene>
<name>TRPA_METTH</name>
<dbReference type="EC" id="4.2.1.20" evidence="1"/>
<dbReference type="EMBL" id="AE000666">
    <property type="protein sequence ID" value="AAB86132.1"/>
    <property type="status" value="ALT_INIT"/>
    <property type="molecule type" value="Genomic_DNA"/>
</dbReference>
<dbReference type="PIR" id="A69089">
    <property type="entry name" value="A69089"/>
</dbReference>
<dbReference type="SMR" id="O27697"/>
<dbReference type="FunCoup" id="O27697">
    <property type="interactions" value="88"/>
</dbReference>
<dbReference type="STRING" id="187420.MTH_1660"/>
<dbReference type="PaxDb" id="187420-MTH_1660"/>
<dbReference type="EnsemblBacteria" id="AAB86132">
    <property type="protein sequence ID" value="AAB86132"/>
    <property type="gene ID" value="MTH_1660"/>
</dbReference>
<dbReference type="KEGG" id="mth:MTH_1660"/>
<dbReference type="PATRIC" id="fig|187420.15.peg.1622"/>
<dbReference type="HOGENOM" id="CLU_016734_0_0_2"/>
<dbReference type="InParanoid" id="O27697"/>
<dbReference type="UniPathway" id="UPA00035">
    <property type="reaction ID" value="UER00044"/>
</dbReference>
<dbReference type="Proteomes" id="UP000005223">
    <property type="component" value="Chromosome"/>
</dbReference>
<dbReference type="GO" id="GO:0005829">
    <property type="term" value="C:cytosol"/>
    <property type="evidence" value="ECO:0007669"/>
    <property type="project" value="TreeGrafter"/>
</dbReference>
<dbReference type="GO" id="GO:0004834">
    <property type="term" value="F:tryptophan synthase activity"/>
    <property type="evidence" value="ECO:0007669"/>
    <property type="project" value="UniProtKB-UniRule"/>
</dbReference>
<dbReference type="CDD" id="cd04724">
    <property type="entry name" value="Tryptophan_synthase_alpha"/>
    <property type="match status" value="1"/>
</dbReference>
<dbReference type="FunFam" id="3.20.20.70:FF:000037">
    <property type="entry name" value="Tryptophan synthase alpha chain"/>
    <property type="match status" value="1"/>
</dbReference>
<dbReference type="Gene3D" id="3.20.20.70">
    <property type="entry name" value="Aldolase class I"/>
    <property type="match status" value="1"/>
</dbReference>
<dbReference type="HAMAP" id="MF_00131">
    <property type="entry name" value="Trp_synth_alpha"/>
    <property type="match status" value="1"/>
</dbReference>
<dbReference type="InterPro" id="IPR013785">
    <property type="entry name" value="Aldolase_TIM"/>
</dbReference>
<dbReference type="InterPro" id="IPR011060">
    <property type="entry name" value="RibuloseP-bd_barrel"/>
</dbReference>
<dbReference type="InterPro" id="IPR018204">
    <property type="entry name" value="Trp_synthase_alpha_AS"/>
</dbReference>
<dbReference type="InterPro" id="IPR002028">
    <property type="entry name" value="Trp_synthase_suA"/>
</dbReference>
<dbReference type="NCBIfam" id="TIGR00262">
    <property type="entry name" value="trpA"/>
    <property type="match status" value="1"/>
</dbReference>
<dbReference type="PANTHER" id="PTHR43406:SF1">
    <property type="entry name" value="TRYPTOPHAN SYNTHASE ALPHA CHAIN, CHLOROPLASTIC"/>
    <property type="match status" value="1"/>
</dbReference>
<dbReference type="PANTHER" id="PTHR43406">
    <property type="entry name" value="TRYPTOPHAN SYNTHASE, ALPHA CHAIN"/>
    <property type="match status" value="1"/>
</dbReference>
<dbReference type="Pfam" id="PF00290">
    <property type="entry name" value="Trp_syntA"/>
    <property type="match status" value="1"/>
</dbReference>
<dbReference type="SUPFAM" id="SSF51366">
    <property type="entry name" value="Ribulose-phoshate binding barrel"/>
    <property type="match status" value="1"/>
</dbReference>
<dbReference type="PROSITE" id="PS00167">
    <property type="entry name" value="TRP_SYNTHASE_ALPHA"/>
    <property type="match status" value="1"/>
</dbReference>
<evidence type="ECO:0000255" key="1">
    <source>
        <dbReference type="HAMAP-Rule" id="MF_00131"/>
    </source>
</evidence>
<evidence type="ECO:0000305" key="2"/>
<accession>O27697</accession>
<sequence length="270" mass="28957">MSGAKSMSYAEMFRRADGCAFVPFVVAGDPDMETSLEIIRTLVDAGADALEVGFPFSDPIADGTSVQGADLRALRAGMTTEKCFQLIERVREFTSIPIGLLVYYNLIYRMGVDEFYRRAAEAGVTGILAADLPPEEASDALRAAEKYDIDQIFIVAPTTGSERLKRISEVSSGFHYLVSVMGVTGARSRVEDATIELIKRVKAEGSLPVMVGFGVSRPEHVRMLRDAGADGVIVGSAIIDVISGNLGDRELMLQRIHEMAGTLKAAGGSG</sequence>
<protein>
    <recommendedName>
        <fullName evidence="1">Tryptophan synthase alpha chain</fullName>
        <ecNumber evidence="1">4.2.1.20</ecNumber>
    </recommendedName>
</protein>
<keyword id="KW-0028">Amino-acid biosynthesis</keyword>
<keyword id="KW-0057">Aromatic amino acid biosynthesis</keyword>
<keyword id="KW-0456">Lyase</keyword>
<keyword id="KW-1185">Reference proteome</keyword>
<keyword id="KW-0822">Tryptophan biosynthesis</keyword>
<comment type="function">
    <text evidence="1">The alpha subunit is responsible for the aldol cleavage of indoleglycerol phosphate to indole and glyceraldehyde 3-phosphate.</text>
</comment>
<comment type="catalytic activity">
    <reaction evidence="1">
        <text>(1S,2R)-1-C-(indol-3-yl)glycerol 3-phosphate + L-serine = D-glyceraldehyde 3-phosphate + L-tryptophan + H2O</text>
        <dbReference type="Rhea" id="RHEA:10532"/>
        <dbReference type="ChEBI" id="CHEBI:15377"/>
        <dbReference type="ChEBI" id="CHEBI:33384"/>
        <dbReference type="ChEBI" id="CHEBI:57912"/>
        <dbReference type="ChEBI" id="CHEBI:58866"/>
        <dbReference type="ChEBI" id="CHEBI:59776"/>
        <dbReference type="EC" id="4.2.1.20"/>
    </reaction>
</comment>
<comment type="pathway">
    <text evidence="1">Amino-acid biosynthesis; L-tryptophan biosynthesis; L-tryptophan from chorismate: step 5/5.</text>
</comment>
<comment type="subunit">
    <text evidence="1">Tetramer of two alpha and two beta chains.</text>
</comment>
<comment type="similarity">
    <text evidence="1">Belongs to the TrpA family.</text>
</comment>
<comment type="sequence caution" evidence="2">
    <conflict type="erroneous initiation">
        <sequence resource="EMBL-CDS" id="AAB86132"/>
    </conflict>
</comment>
<reference key="1">
    <citation type="journal article" date="1997" name="J. Bacteriol.">
        <title>Complete genome sequence of Methanobacterium thermoautotrophicum deltaH: functional analysis and comparative genomics.</title>
        <authorList>
            <person name="Smith D.R."/>
            <person name="Doucette-Stamm L.A."/>
            <person name="Deloughery C."/>
            <person name="Lee H.-M."/>
            <person name="Dubois J."/>
            <person name="Aldredge T."/>
            <person name="Bashirzadeh R."/>
            <person name="Blakely D."/>
            <person name="Cook R."/>
            <person name="Gilbert K."/>
            <person name="Harrison D."/>
            <person name="Hoang L."/>
            <person name="Keagle P."/>
            <person name="Lumm W."/>
            <person name="Pothier B."/>
            <person name="Qiu D."/>
            <person name="Spadafora R."/>
            <person name="Vicare R."/>
            <person name="Wang Y."/>
            <person name="Wierzbowski J."/>
            <person name="Gibson R."/>
            <person name="Jiwani N."/>
            <person name="Caruso A."/>
            <person name="Bush D."/>
            <person name="Safer H."/>
            <person name="Patwell D."/>
            <person name="Prabhakar S."/>
            <person name="McDougall S."/>
            <person name="Shimer G."/>
            <person name="Goyal A."/>
            <person name="Pietrovski S."/>
            <person name="Church G.M."/>
            <person name="Daniels C.J."/>
            <person name="Mao J.-I."/>
            <person name="Rice P."/>
            <person name="Noelling J."/>
            <person name="Reeve J.N."/>
        </authorList>
    </citation>
    <scope>NUCLEOTIDE SEQUENCE [LARGE SCALE GENOMIC DNA]</scope>
    <source>
        <strain>ATCC 29096 / DSM 1053 / JCM 10044 / NBRC 100330 / Delta H</strain>
    </source>
</reference>